<proteinExistence type="inferred from homology"/>
<evidence type="ECO:0000255" key="1">
    <source>
        <dbReference type="HAMAP-Rule" id="MF_00643"/>
    </source>
</evidence>
<dbReference type="EMBL" id="AF123835">
    <property type="protein sequence ID" value="AAG26219.1"/>
    <property type="molecule type" value="Genomic_DNA"/>
</dbReference>
<dbReference type="SMR" id="Q7J1B3"/>
<dbReference type="GO" id="GO:0009535">
    <property type="term" value="C:chloroplast thylakoid membrane"/>
    <property type="evidence" value="ECO:0007669"/>
    <property type="project" value="UniProtKB-SubCell"/>
</dbReference>
<dbReference type="GO" id="GO:0009539">
    <property type="term" value="C:photosystem II reaction center"/>
    <property type="evidence" value="ECO:0007669"/>
    <property type="project" value="InterPro"/>
</dbReference>
<dbReference type="GO" id="GO:0009055">
    <property type="term" value="F:electron transfer activity"/>
    <property type="evidence" value="ECO:0007669"/>
    <property type="project" value="UniProtKB-UniRule"/>
</dbReference>
<dbReference type="GO" id="GO:0020037">
    <property type="term" value="F:heme binding"/>
    <property type="evidence" value="ECO:0007669"/>
    <property type="project" value="InterPro"/>
</dbReference>
<dbReference type="GO" id="GO:0005506">
    <property type="term" value="F:iron ion binding"/>
    <property type="evidence" value="ECO:0007669"/>
    <property type="project" value="UniProtKB-UniRule"/>
</dbReference>
<dbReference type="GO" id="GO:0009767">
    <property type="term" value="P:photosynthetic electron transport chain"/>
    <property type="evidence" value="ECO:0007669"/>
    <property type="project" value="InterPro"/>
</dbReference>
<dbReference type="HAMAP" id="MF_00643">
    <property type="entry name" value="PSII_PsbF"/>
    <property type="match status" value="1"/>
</dbReference>
<dbReference type="InterPro" id="IPR006241">
    <property type="entry name" value="PSII_cyt_b559_bsu"/>
</dbReference>
<dbReference type="InterPro" id="IPR006216">
    <property type="entry name" value="PSII_cyt_b559_CS"/>
</dbReference>
<dbReference type="InterPro" id="IPR013081">
    <property type="entry name" value="PSII_cyt_b559_N"/>
</dbReference>
<dbReference type="NCBIfam" id="TIGR01333">
    <property type="entry name" value="cyt_b559_beta"/>
    <property type="match status" value="1"/>
</dbReference>
<dbReference type="Pfam" id="PF00283">
    <property type="entry name" value="Cytochrom_B559"/>
    <property type="match status" value="1"/>
</dbReference>
<dbReference type="PIRSF" id="PIRSF000037">
    <property type="entry name" value="PsbF"/>
    <property type="match status" value="1"/>
</dbReference>
<dbReference type="SUPFAM" id="SSF161045">
    <property type="entry name" value="Cytochrome b559 subunits"/>
    <property type="match status" value="1"/>
</dbReference>
<dbReference type="PROSITE" id="PS00537">
    <property type="entry name" value="CYTOCHROME_B559"/>
    <property type="match status" value="1"/>
</dbReference>
<geneLocation type="chloroplast"/>
<reference key="1">
    <citation type="journal article" date="2000" name="Am. J. Bot.">
        <title>Utility of 17 chloroplast genes for inferring the phylogeny of the basal angiosperms.</title>
        <authorList>
            <person name="Graham S.W."/>
            <person name="Olmstead R.G."/>
        </authorList>
    </citation>
    <scope>NUCLEOTIDE SEQUENCE [GENOMIC DNA]</scope>
</reference>
<sequence length="39" mass="4424">MTIDRTYPIFTVRWLAVHGLAVPTVSFLGSISAMQFIQR</sequence>
<gene>
    <name evidence="1" type="primary">psbF</name>
</gene>
<comment type="function">
    <text evidence="1">This b-type cytochrome is tightly associated with the reaction center of photosystem II (PSII). PSII is a light-driven water:plastoquinone oxidoreductase that uses light energy to abstract electrons from H(2)O, generating O(2) and a proton gradient subsequently used for ATP formation. It consists of a core antenna complex that captures photons, and an electron transfer chain that converts photonic excitation into a charge separation.</text>
</comment>
<comment type="cofactor">
    <cofactor evidence="1">
        <name>heme b</name>
        <dbReference type="ChEBI" id="CHEBI:60344"/>
    </cofactor>
    <text evidence="1">With its partner (PsbE) binds heme. PSII binds additional chlorophylls, carotenoids and specific lipids.</text>
</comment>
<comment type="subunit">
    <text evidence="1">Heterodimer of an alpha subunit and a beta subunit. PSII is composed of 1 copy each of membrane proteins PsbA, PsbB, PsbC, PsbD, PsbE, PsbF, PsbH, PsbI, PsbJ, PsbK, PsbL, PsbM, PsbT, PsbX, PsbY, PsbZ, Psb30/Ycf12, at least 3 peripheral proteins of the oxygen-evolving complex and a large number of cofactors. It forms dimeric complexes.</text>
</comment>
<comment type="subcellular location">
    <subcellularLocation>
        <location evidence="1">Plastid</location>
        <location evidence="1">Chloroplast thylakoid membrane</location>
        <topology evidence="1">Single-pass membrane protein</topology>
    </subcellularLocation>
</comment>
<comment type="similarity">
    <text evidence="1">Belongs to the PsbE/PsbF family.</text>
</comment>
<accession>Q7J1B3</accession>
<organism>
    <name type="scientific">Drimys winteri</name>
    <name type="common">Winter's bark</name>
    <name type="synonym">Drimys chilensis</name>
    <dbReference type="NCBI Taxonomy" id="3419"/>
    <lineage>
        <taxon>Eukaryota</taxon>
        <taxon>Viridiplantae</taxon>
        <taxon>Streptophyta</taxon>
        <taxon>Embryophyta</taxon>
        <taxon>Tracheophyta</taxon>
        <taxon>Spermatophyta</taxon>
        <taxon>Magnoliopsida</taxon>
        <taxon>Magnoliidae</taxon>
        <taxon>Canellales</taxon>
        <taxon>Winteraceae</taxon>
        <taxon>Drimys</taxon>
    </lineage>
</organism>
<feature type="chain" id="PRO_0000200388" description="Cytochrome b559 subunit beta">
    <location>
        <begin position="1"/>
        <end position="39"/>
    </location>
</feature>
<feature type="transmembrane region" description="Helical" evidence="1">
    <location>
        <begin position="14"/>
        <end position="30"/>
    </location>
</feature>
<feature type="binding site" description="axial binding residue" evidence="1">
    <location>
        <position position="18"/>
    </location>
    <ligand>
        <name>heme</name>
        <dbReference type="ChEBI" id="CHEBI:30413"/>
        <note>ligand shared with alpha subunit</note>
    </ligand>
    <ligandPart>
        <name>Fe</name>
        <dbReference type="ChEBI" id="CHEBI:18248"/>
    </ligandPart>
</feature>
<keyword id="KW-0150">Chloroplast</keyword>
<keyword id="KW-0249">Electron transport</keyword>
<keyword id="KW-0349">Heme</keyword>
<keyword id="KW-0408">Iron</keyword>
<keyword id="KW-0472">Membrane</keyword>
<keyword id="KW-0479">Metal-binding</keyword>
<keyword id="KW-0602">Photosynthesis</keyword>
<keyword id="KW-0604">Photosystem II</keyword>
<keyword id="KW-0934">Plastid</keyword>
<keyword id="KW-0793">Thylakoid</keyword>
<keyword id="KW-0812">Transmembrane</keyword>
<keyword id="KW-1133">Transmembrane helix</keyword>
<keyword id="KW-0813">Transport</keyword>
<protein>
    <recommendedName>
        <fullName evidence="1">Cytochrome b559 subunit beta</fullName>
    </recommendedName>
    <alternativeName>
        <fullName evidence="1">PSII reaction center subunit VI</fullName>
    </alternativeName>
</protein>
<name>PSBF_DRIWI</name>